<comment type="subcellular location">
    <subcellularLocation>
        <location evidence="2">Membrane</location>
        <topology evidence="2">Single-pass membrane protein</topology>
    </subcellularLocation>
</comment>
<accession>Q3E815</accession>
<accession>D3DLC4</accession>
<gene>
    <name type="ordered locus">YHR175W-A</name>
</gene>
<organism>
    <name type="scientific">Saccharomyces cerevisiae (strain ATCC 204508 / S288c)</name>
    <name type="common">Baker's yeast</name>
    <dbReference type="NCBI Taxonomy" id="559292"/>
    <lineage>
        <taxon>Eukaryota</taxon>
        <taxon>Fungi</taxon>
        <taxon>Dikarya</taxon>
        <taxon>Ascomycota</taxon>
        <taxon>Saccharomycotina</taxon>
        <taxon>Saccharomycetes</taxon>
        <taxon>Saccharomycetales</taxon>
        <taxon>Saccharomycetaceae</taxon>
        <taxon>Saccharomyces</taxon>
    </lineage>
</organism>
<feature type="chain" id="PRO_0000245396" description="Uncharacterized membrane protein YHR175W-A">
    <location>
        <begin position="1"/>
        <end position="49"/>
    </location>
</feature>
<feature type="transmembrane region" description="Helical" evidence="1">
    <location>
        <begin position="17"/>
        <end position="39"/>
    </location>
</feature>
<proteinExistence type="predicted"/>
<evidence type="ECO:0000255" key="1"/>
<evidence type="ECO:0000305" key="2"/>
<protein>
    <recommendedName>
        <fullName>Uncharacterized membrane protein YHR175W-A</fullName>
    </recommendedName>
</protein>
<sequence>MINYVNITCIIFSTRTLLVFDTSLYIPPFMLSFIGYSLSNQNSPLFLYH</sequence>
<name>YH175_YEAST</name>
<keyword id="KW-0472">Membrane</keyword>
<keyword id="KW-1185">Reference proteome</keyword>
<keyword id="KW-0812">Transmembrane</keyword>
<keyword id="KW-1133">Transmembrane helix</keyword>
<dbReference type="EMBL" id="U00027">
    <property type="status" value="NOT_ANNOTATED_CDS"/>
    <property type="molecule type" value="Genomic_DNA"/>
</dbReference>
<dbReference type="EMBL" id="BK006934">
    <property type="protein sequence ID" value="DAA06868.1"/>
    <property type="molecule type" value="Genomic_DNA"/>
</dbReference>
<dbReference type="RefSeq" id="NP_878090.1">
    <property type="nucleotide sequence ID" value="NM_001184554.1"/>
</dbReference>
<dbReference type="BioGRID" id="37072">
    <property type="interactions" value="10"/>
</dbReference>
<dbReference type="FunCoup" id="Q3E815">
    <property type="interactions" value="2"/>
</dbReference>
<dbReference type="STRING" id="4932.YHR175W-A"/>
<dbReference type="PaxDb" id="4932-YHR175W-A"/>
<dbReference type="EnsemblFungi" id="YHR175W-A_mRNA">
    <property type="protein sequence ID" value="YHR175W-A"/>
    <property type="gene ID" value="YHR175W-A"/>
</dbReference>
<dbReference type="GeneID" id="1466530"/>
<dbReference type="KEGG" id="sce:YHR175W-A"/>
<dbReference type="AGR" id="SGD:S000028553"/>
<dbReference type="SGD" id="S000028553">
    <property type="gene designation" value="YHR175W-A"/>
</dbReference>
<dbReference type="VEuPathDB" id="FungiDB:YHR175W-A"/>
<dbReference type="HOGENOM" id="CLU_3143864_0_0_1"/>
<dbReference type="InParanoid" id="Q3E815"/>
<dbReference type="BioCyc" id="YEAST:G3O-31268-MONOMER"/>
<dbReference type="BioGRID-ORCS" id="1466530">
    <property type="hits" value="0 hits in 10 CRISPR screens"/>
</dbReference>
<dbReference type="PRO" id="PR:Q3E815"/>
<dbReference type="Proteomes" id="UP000002311">
    <property type="component" value="Chromosome VIII"/>
</dbReference>
<dbReference type="GO" id="GO:0016020">
    <property type="term" value="C:membrane"/>
    <property type="evidence" value="ECO:0007669"/>
    <property type="project" value="UniProtKB-SubCell"/>
</dbReference>
<reference key="1">
    <citation type="journal article" date="1994" name="Science">
        <title>Complete nucleotide sequence of Saccharomyces cerevisiae chromosome VIII.</title>
        <authorList>
            <person name="Johnston M."/>
            <person name="Andrews S."/>
            <person name="Brinkman R."/>
            <person name="Cooper J."/>
            <person name="Ding H."/>
            <person name="Dover J."/>
            <person name="Du Z."/>
            <person name="Favello A."/>
            <person name="Fulton L."/>
            <person name="Gattung S."/>
            <person name="Geisel C."/>
            <person name="Kirsten J."/>
            <person name="Kucaba T."/>
            <person name="Hillier L.W."/>
            <person name="Jier M."/>
            <person name="Johnston L."/>
            <person name="Langston Y."/>
            <person name="Latreille P."/>
            <person name="Louis E.J."/>
            <person name="Macri C."/>
            <person name="Mardis E."/>
            <person name="Menezes S."/>
            <person name="Mouser L."/>
            <person name="Nhan M."/>
            <person name="Rifkin L."/>
            <person name="Riles L."/>
            <person name="St Peter H."/>
            <person name="Trevaskis E."/>
            <person name="Vaughan K."/>
            <person name="Vignati D."/>
            <person name="Wilcox L."/>
            <person name="Wohldman P."/>
            <person name="Waterston R."/>
            <person name="Wilson R."/>
            <person name="Vaudin M."/>
        </authorList>
    </citation>
    <scope>NUCLEOTIDE SEQUENCE [LARGE SCALE GENOMIC DNA]</scope>
    <source>
        <strain>ATCC 204508 / S288c</strain>
    </source>
</reference>
<reference key="2">
    <citation type="journal article" date="2014" name="G3 (Bethesda)">
        <title>The reference genome sequence of Saccharomyces cerevisiae: Then and now.</title>
        <authorList>
            <person name="Engel S.R."/>
            <person name="Dietrich F.S."/>
            <person name="Fisk D.G."/>
            <person name="Binkley G."/>
            <person name="Balakrishnan R."/>
            <person name="Costanzo M.C."/>
            <person name="Dwight S.S."/>
            <person name="Hitz B.C."/>
            <person name="Karra K."/>
            <person name="Nash R.S."/>
            <person name="Weng S."/>
            <person name="Wong E.D."/>
            <person name="Lloyd P."/>
            <person name="Skrzypek M.S."/>
            <person name="Miyasato S.R."/>
            <person name="Simison M."/>
            <person name="Cherry J.M."/>
        </authorList>
    </citation>
    <scope>GENOME REANNOTATION</scope>
    <source>
        <strain>ATCC 204508 / S288c</strain>
    </source>
</reference>
<reference key="3">
    <citation type="journal article" date="2003" name="Genome Res.">
        <title>Systematic discovery of new genes in the Saccharomyces cerevisiae genome.</title>
        <authorList>
            <person name="Kessler M.M."/>
            <person name="Zeng Q."/>
            <person name="Hogan S."/>
            <person name="Cook R."/>
            <person name="Morales A.J."/>
            <person name="Cottarel G."/>
        </authorList>
    </citation>
    <scope>GENOME REANNOTATION</scope>
</reference>